<protein>
    <recommendedName>
        <fullName>High mobility group protein 20A</fullName>
    </recommendedName>
    <alternativeName>
        <fullName>HMG box-containing protein 20A</fullName>
    </alternativeName>
    <alternativeName>
        <fullName>HMG domain-containing protein 1</fullName>
    </alternativeName>
    <alternativeName>
        <fullName>HMG domain-containing protein HMGX1</fullName>
    </alternativeName>
</protein>
<comment type="function">
    <text evidence="1">Plays a role in neuronal differentiation as chromatin-associated protein. Acts as inhibitor of HMG20B. Overcomes the repressive effects of the neuronal silencer REST and induces the activation of neuronal-specific genes. Involved in the recruitment of the histone methyltransferase KMT2A/MLL1 and consequent increased methylation of histone H3 lysine 4 (By similarity).</text>
</comment>
<comment type="subunit">
    <text evidence="2">Interacts with DTNB.</text>
</comment>
<comment type="interaction">
    <interactant intactId="EBI-740641">
        <id>Q9NP66</id>
    </interactant>
    <interactant intactId="EBI-10206868">
        <id>P35611-5</id>
        <label>ADD1</label>
    </interactant>
    <organismsDiffer>false</organismsDiffer>
    <experiments>3</experiments>
</comment>
<comment type="interaction">
    <interactant intactId="EBI-740641">
        <id>Q9NP66</id>
    </interactant>
    <interactant intactId="EBI-712648">
        <id>O95994</id>
        <label>AGR2</label>
    </interactant>
    <organismsDiffer>false</organismsDiffer>
    <experiments>3</experiments>
</comment>
<comment type="interaction">
    <interactant intactId="EBI-740641">
        <id>Q9NP66</id>
    </interactant>
    <interactant intactId="EBI-1642333">
        <id>Q9BYV9</id>
        <label>BACH2</label>
    </interactant>
    <organismsDiffer>false</organismsDiffer>
    <experiments>3</experiments>
</comment>
<comment type="interaction">
    <interactant intactId="EBI-740641">
        <id>Q9NP66</id>
    </interactant>
    <interactant intactId="EBI-358049">
        <id>Q13895</id>
        <label>BYSL</label>
    </interactant>
    <organismsDiffer>false</organismsDiffer>
    <experiments>3</experiments>
</comment>
<comment type="interaction">
    <interactant intactId="EBI-740641">
        <id>Q9NP66</id>
    </interactant>
    <interactant intactId="EBI-2961725">
        <id>Q96LT7</id>
        <label>C9orf72</label>
    </interactant>
    <organismsDiffer>false</organismsDiffer>
    <experiments>3</experiments>
</comment>
<comment type="interaction">
    <interactant intactId="EBI-740641">
        <id>Q9NP66</id>
    </interactant>
    <interactant intactId="EBI-10171416">
        <id>Q96JN2-2</id>
        <label>CCDC136</label>
    </interactant>
    <organismsDiffer>false</organismsDiffer>
    <experiments>3</experiments>
</comment>
<comment type="interaction">
    <interactant intactId="EBI-740641">
        <id>Q9NP66</id>
    </interactant>
    <interactant intactId="EBI-1045350">
        <id>Q16204</id>
        <label>CCDC6</label>
    </interactant>
    <organismsDiffer>false</organismsDiffer>
    <experiments>3</experiments>
</comment>
<comment type="interaction">
    <interactant intactId="EBI-740641">
        <id>Q9NP66</id>
    </interactant>
    <interactant intactId="EBI-372775">
        <id>Q96GE4</id>
        <label>CEP95</label>
    </interactant>
    <organismsDiffer>false</organismsDiffer>
    <experiments>3</experiments>
</comment>
<comment type="interaction">
    <interactant intactId="EBI-740641">
        <id>Q9NP66</id>
    </interactant>
    <interactant intactId="EBI-742422">
        <id>Q96M91</id>
        <label>CFAP53</label>
    </interactant>
    <organismsDiffer>false</organismsDiffer>
    <experiments>3</experiments>
</comment>
<comment type="interaction">
    <interactant intactId="EBI-740641">
        <id>Q9NP66</id>
    </interactant>
    <interactant intactId="EBI-1188472">
        <id>P78358</id>
        <label>CTAG1B</label>
    </interactant>
    <organismsDiffer>false</organismsDiffer>
    <experiments>3</experiments>
</comment>
<comment type="interaction">
    <interactant intactId="EBI-740641">
        <id>Q9NP66</id>
    </interactant>
    <interactant intactId="EBI-16432590">
        <id>A0A0S2Z5D5</id>
        <label>DCTN4</label>
    </interactant>
    <organismsDiffer>false</organismsDiffer>
    <experiments>3</experiments>
</comment>
<comment type="interaction">
    <interactant intactId="EBI-740641">
        <id>Q9NP66</id>
    </interactant>
    <interactant intactId="EBI-742054">
        <id>Q96D03</id>
        <label>DDIT4L</label>
    </interactant>
    <organismsDiffer>false</organismsDiffer>
    <experiments>3</experiments>
</comment>
<comment type="interaction">
    <interactant intactId="EBI-740641">
        <id>Q9NP66</id>
    </interactant>
    <interactant intactId="EBI-742953">
        <id>Q9BY27</id>
        <label>DGCR6L</label>
    </interactant>
    <organismsDiffer>false</organismsDiffer>
    <experiments>3</experiments>
</comment>
<comment type="interaction">
    <interactant intactId="EBI-740641">
        <id>Q9NP66</id>
    </interactant>
    <interactant intactId="EBI-740402">
        <id>O60941</id>
        <label>DTNB</label>
    </interactant>
    <organismsDiffer>false</organismsDiffer>
    <experiments>4</experiments>
</comment>
<comment type="interaction">
    <interactant intactId="EBI-740641">
        <id>Q9NP66</id>
    </interactant>
    <interactant intactId="EBI-11984733">
        <id>O60941-5</id>
        <label>DTNB</label>
    </interactant>
    <organismsDiffer>false</organismsDiffer>
    <experiments>4</experiments>
</comment>
<comment type="interaction">
    <interactant intactId="EBI-740641">
        <id>Q9NP66</id>
    </interactant>
    <interactant intactId="EBI-2339219">
        <id>Q08426</id>
        <label>EHHADH</label>
    </interactant>
    <organismsDiffer>false</organismsDiffer>
    <experiments>3</experiments>
</comment>
<comment type="interaction">
    <interactant intactId="EBI-740641">
        <id>Q9NP66</id>
    </interactant>
    <interactant intactId="EBI-10191924">
        <id>O95466-2</id>
        <label>FMNL1</label>
    </interactant>
    <organismsDiffer>false</organismsDiffer>
    <experiments>3</experiments>
</comment>
<comment type="interaction">
    <interactant intactId="EBI-740641">
        <id>Q9NP66</id>
    </interactant>
    <interactant intactId="EBI-11320806">
        <id>Q9NU39</id>
        <label>FOXD4L1</label>
    </interactant>
    <organismsDiffer>false</organismsDiffer>
    <experiments>3</experiments>
</comment>
<comment type="interaction">
    <interactant intactId="EBI-740641">
        <id>Q9NP66</id>
    </interactant>
    <interactant intactId="EBI-372506">
        <id>Q8TAE8</id>
        <label>GADD45GIP1</label>
    </interactant>
    <organismsDiffer>false</organismsDiffer>
    <experiments>3</experiments>
</comment>
<comment type="interaction">
    <interactant intactId="EBI-740641">
        <id>Q9NP66</id>
    </interactant>
    <interactant intactId="EBI-10261098">
        <id>Q86YR5-3</id>
        <label>GPSM1</label>
    </interactant>
    <organismsDiffer>false</organismsDiffer>
    <experiments>3</experiments>
</comment>
<comment type="interaction">
    <interactant intactId="EBI-740641">
        <id>Q9NP66</id>
    </interactant>
    <interactant intactId="EBI-740641">
        <id>Q9NP66</id>
        <label>HMG20A</label>
    </interactant>
    <organismsDiffer>false</organismsDiffer>
    <experiments>10</experiments>
</comment>
<comment type="interaction">
    <interactant intactId="EBI-740641">
        <id>Q9NP66</id>
    </interactant>
    <interactant intactId="EBI-713401">
        <id>Q9P0W2</id>
        <label>HMG20B</label>
    </interactant>
    <organismsDiffer>false</organismsDiffer>
    <experiments>8</experiments>
</comment>
<comment type="interaction">
    <interactant intactId="EBI-740641">
        <id>Q9NP66</id>
    </interactant>
    <interactant intactId="EBI-749311">
        <id>P37235</id>
        <label>HPCAL1</label>
    </interactant>
    <organismsDiffer>false</organismsDiffer>
    <experiments>4</experiments>
</comment>
<comment type="interaction">
    <interactant intactId="EBI-740641">
        <id>Q9NP66</id>
    </interactant>
    <interactant intactId="EBI-466029">
        <id>P42858</id>
        <label>HTT</label>
    </interactant>
    <organismsDiffer>false</organismsDiffer>
    <experiments>2</experiments>
</comment>
<comment type="interaction">
    <interactant intactId="EBI-740641">
        <id>Q9NP66</id>
    </interactant>
    <interactant intactId="EBI-14069005">
        <id>Q9BVG8-5</id>
        <label>KIFC3</label>
    </interactant>
    <organismsDiffer>false</organismsDiffer>
    <experiments>3</experiments>
</comment>
<comment type="interaction">
    <interactant intactId="EBI-740641">
        <id>Q9NP66</id>
    </interactant>
    <interactant intactId="EBI-349938">
        <id>P52292</id>
        <label>KPNA2</label>
    </interactant>
    <organismsDiffer>false</organismsDiffer>
    <experiments>3</experiments>
</comment>
<comment type="interaction">
    <interactant intactId="EBI-740641">
        <id>Q9NP66</id>
    </interactant>
    <interactant intactId="EBI-298429">
        <id>P04264</id>
        <label>KRT1</label>
    </interactant>
    <organismsDiffer>false</organismsDiffer>
    <experiments>3</experiments>
</comment>
<comment type="interaction">
    <interactant intactId="EBI-740641">
        <id>Q9NP66</id>
    </interactant>
    <interactant intactId="EBI-8639312">
        <id>P25800</id>
        <label>LMO1</label>
    </interactant>
    <organismsDiffer>false</organismsDiffer>
    <experiments>3</experiments>
</comment>
<comment type="interaction">
    <interactant intactId="EBI-740641">
        <id>Q9NP66</id>
    </interactant>
    <interactant intactId="EBI-739832">
        <id>Q8TBB1</id>
        <label>LNX1</label>
    </interactant>
    <organismsDiffer>false</organismsDiffer>
    <experiments>3</experiments>
</comment>
<comment type="interaction">
    <interactant intactId="EBI-740641">
        <id>Q9NP66</id>
    </interactant>
    <interactant intactId="EBI-741355">
        <id>Q96LR2</id>
        <label>LURAP1</label>
    </interactant>
    <organismsDiffer>false</organismsDiffer>
    <experiments>5</experiments>
</comment>
<comment type="interaction">
    <interactant intactId="EBI-740641">
        <id>Q9NP66</id>
    </interactant>
    <interactant intactId="EBI-746778">
        <id>Q96A72</id>
        <label>MAGOHB</label>
    </interactant>
    <organismsDiffer>false</organismsDiffer>
    <experiments>4</experiments>
</comment>
<comment type="interaction">
    <interactant intactId="EBI-740641">
        <id>Q9NP66</id>
    </interactant>
    <interactant intactId="EBI-10288852">
        <id>Q9UBU8-2</id>
        <label>MORF4L1</label>
    </interactant>
    <organismsDiffer>false</organismsDiffer>
    <experiments>3</experiments>
</comment>
<comment type="interaction">
    <interactant intactId="EBI-740641">
        <id>Q9NP66</id>
    </interactant>
    <interactant intactId="EBI-741158">
        <id>Q96HA8</id>
        <label>NTAQ1</label>
    </interactant>
    <organismsDiffer>false</organismsDiffer>
    <experiments>5</experiments>
</comment>
<comment type="interaction">
    <interactant intactId="EBI-740641">
        <id>Q9NP66</id>
    </interactant>
    <interactant intactId="EBI-591778">
        <id>P61970</id>
        <label>NUTF2</label>
    </interactant>
    <organismsDiffer>false</organismsDiffer>
    <experiments>3</experiments>
</comment>
<comment type="interaction">
    <interactant intactId="EBI-740641">
        <id>Q9NP66</id>
    </interactant>
    <interactant intactId="EBI-10225049">
        <id>Q7RTU3</id>
        <label>OLIG3</label>
    </interactant>
    <organismsDiffer>false</organismsDiffer>
    <experiments>3</experiments>
</comment>
<comment type="interaction">
    <interactant intactId="EBI-740641">
        <id>Q9NP66</id>
    </interactant>
    <interactant intactId="EBI-348567">
        <id>O75928-2</id>
        <label>PIAS2</label>
    </interactant>
    <organismsDiffer>false</organismsDiffer>
    <experiments>3</experiments>
</comment>
<comment type="interaction">
    <interactant intactId="EBI-740641">
        <id>Q9NP66</id>
    </interactant>
    <interactant intactId="EBI-79165">
        <id>Q9NRD5</id>
        <label>PICK1</label>
    </interactant>
    <organismsDiffer>false</organismsDiffer>
    <experiments>6</experiments>
</comment>
<comment type="interaction">
    <interactant intactId="EBI-740641">
        <id>Q9NP66</id>
    </interactant>
    <interactant intactId="EBI-372273">
        <id>P20618</id>
        <label>PSMB1</label>
    </interactant>
    <organismsDiffer>false</organismsDiffer>
    <experiments>3</experiments>
</comment>
<comment type="interaction">
    <interactant intactId="EBI-740641">
        <id>Q9NP66</id>
    </interactant>
    <interactant intactId="EBI-11974061">
        <id>Q9UIG4</id>
        <label>PSORS1C2</label>
    </interactant>
    <organismsDiffer>false</organismsDiffer>
    <experiments>3</experiments>
</comment>
<comment type="interaction">
    <interactant intactId="EBI-740641">
        <id>Q9NP66</id>
    </interactant>
    <interactant intactId="EBI-16430249">
        <id>A0A0S2Z528</id>
        <label>PSTPIP1</label>
    </interactant>
    <organismsDiffer>false</organismsDiffer>
    <experiments>3</experiments>
</comment>
<comment type="interaction">
    <interactant intactId="EBI-740641">
        <id>Q9NP66</id>
    </interactant>
    <interactant intactId="EBI-1045772">
        <id>P49190</id>
        <label>PTH2R</label>
    </interactant>
    <organismsDiffer>false</organismsDiffer>
    <experiments>3</experiments>
</comment>
<comment type="interaction">
    <interactant intactId="EBI-740641">
        <id>Q9NP66</id>
    </interactant>
    <interactant intactId="EBI-347462">
        <id>P47897</id>
        <label>QARS1</label>
    </interactant>
    <organismsDiffer>false</organismsDiffer>
    <experiments>3</experiments>
</comment>
<comment type="interaction">
    <interactant intactId="EBI-740641">
        <id>Q9NP66</id>
    </interactant>
    <interactant intactId="EBI-948156">
        <id>Q9Y4B4</id>
        <label>RAD54L2</label>
    </interactant>
    <organismsDiffer>false</organismsDiffer>
    <experiments>3</experiments>
</comment>
<comment type="interaction">
    <interactant intactId="EBI-740641">
        <id>Q9NP66</id>
    </interactant>
    <interactant intactId="EBI-366017">
        <id>Q13671</id>
        <label>RIN1</label>
    </interactant>
    <organismsDiffer>false</organismsDiffer>
    <experiments>3</experiments>
</comment>
<comment type="interaction">
    <interactant intactId="EBI-740641">
        <id>Q9NP66</id>
    </interactant>
    <interactant intactId="EBI-366553">
        <id>P78346</id>
        <label>RPP30</label>
    </interactant>
    <organismsDiffer>false</organismsDiffer>
    <experiments>11</experiments>
</comment>
<comment type="interaction">
    <interactant intactId="EBI-740641">
        <id>Q9NP66</id>
    </interactant>
    <interactant intactId="EBI-747925">
        <id>Q9NQG5</id>
        <label>RPRD1B</label>
    </interactant>
    <organismsDiffer>false</organismsDiffer>
    <experiments>3</experiments>
</comment>
<comment type="interaction">
    <interactant intactId="EBI-740641">
        <id>Q9NP66</id>
    </interactant>
    <interactant intactId="EBI-10305303">
        <id>Q9H1X1</id>
        <label>RSPH9</label>
    </interactant>
    <organismsDiffer>false</organismsDiffer>
    <experiments>3</experiments>
</comment>
<comment type="interaction">
    <interactant intactId="EBI-740641">
        <id>Q9NP66</id>
    </interactant>
    <interactant intactId="EBI-6257312">
        <id>Q9BVN2</id>
        <label>RUSC1</label>
    </interactant>
    <organismsDiffer>false</organismsDiffer>
    <experiments>3</experiments>
</comment>
<comment type="interaction">
    <interactant intactId="EBI-740641">
        <id>Q9NP66</id>
    </interactant>
    <interactant intactId="EBI-748391">
        <id>Q9BWG6</id>
        <label>SCNM1</label>
    </interactant>
    <organismsDiffer>false</organismsDiffer>
    <experiments>7</experiments>
</comment>
<comment type="interaction">
    <interactant intactId="EBI-740641">
        <id>Q9NP66</id>
    </interactant>
    <interactant intactId="EBI-10262251">
        <id>Q8IWU4</id>
        <label>SLC30A8</label>
    </interactant>
    <organismsDiffer>false</organismsDiffer>
    <experiments>3</experiments>
</comment>
<comment type="interaction">
    <interactant intactId="EBI-740641">
        <id>Q9NP66</id>
    </interactant>
    <interactant intactId="EBI-8463848">
        <id>Q8NB12</id>
        <label>SMYD1</label>
    </interactant>
    <organismsDiffer>false</organismsDiffer>
    <experiments>3</experiments>
</comment>
<comment type="interaction">
    <interactant intactId="EBI-740641">
        <id>Q9NP66</id>
    </interactant>
    <interactant intactId="EBI-3921347">
        <id>P51687</id>
        <label>SUOX</label>
    </interactant>
    <organismsDiffer>false</organismsDiffer>
    <experiments>3</experiments>
</comment>
<comment type="interaction">
    <interactant intactId="EBI-740641">
        <id>Q9NP66</id>
    </interactant>
    <interactant intactId="EBI-747142">
        <id>Q96C24</id>
        <label>SYTL4</label>
    </interactant>
    <organismsDiffer>false</organismsDiffer>
    <experiments>7</experiments>
</comment>
<comment type="interaction">
    <interactant intactId="EBI-740641">
        <id>Q9NP66</id>
    </interactant>
    <interactant intactId="EBI-8787464">
        <id>Q9NU19</id>
        <label>TBC1D22B</label>
    </interactant>
    <organismsDiffer>false</organismsDiffer>
    <experiments>3</experiments>
</comment>
<comment type="interaction">
    <interactant intactId="EBI-740641">
        <id>Q9NP66</id>
    </interactant>
    <interactant intactId="EBI-740781">
        <id>Q9BT92</id>
        <label>TCHP</label>
    </interactant>
    <organismsDiffer>false</organismsDiffer>
    <experiments>3</experiments>
</comment>
<comment type="interaction">
    <interactant intactId="EBI-740641">
        <id>Q9NP66</id>
    </interactant>
    <interactant intactId="EBI-2555179">
        <id>Q9NUJ3</id>
        <label>TCP11L1</label>
    </interactant>
    <organismsDiffer>false</organismsDiffer>
    <experiments>3</experiments>
</comment>
<comment type="interaction">
    <interactant intactId="EBI-740641">
        <id>Q9NP66</id>
    </interactant>
    <interactant intactId="EBI-740653">
        <id>Q96BS2</id>
        <label>TESC</label>
    </interactant>
    <organismsDiffer>false</organismsDiffer>
    <experiments>2</experiments>
</comment>
<comment type="interaction">
    <interactant intactId="EBI-740641">
        <id>Q9NP66</id>
    </interactant>
    <interactant intactId="EBI-3650647">
        <id>Q9BUZ4</id>
        <label>TRAF4</label>
    </interactant>
    <organismsDiffer>false</organismsDiffer>
    <experiments>3</experiments>
</comment>
<comment type="interaction">
    <interactant intactId="EBI-740641">
        <id>Q9NP66</id>
    </interactant>
    <interactant intactId="EBI-3246160">
        <id>Q8IUR0</id>
        <label>TRAPPC5</label>
    </interactant>
    <organismsDiffer>false</organismsDiffer>
    <experiments>5</experiments>
</comment>
<comment type="interaction">
    <interactant intactId="EBI-740641">
        <id>Q9NP66</id>
    </interactant>
    <interactant intactId="EBI-739895">
        <id>Q8N6Y0</id>
        <label>USHBP1</label>
    </interactant>
    <organismsDiffer>false</organismsDiffer>
    <experiments>3</experiments>
</comment>
<comment type="subcellular location">
    <subcellularLocation>
        <location evidence="4">Nucleus</location>
    </subcellularLocation>
</comment>
<comment type="alternative products">
    <event type="alternative splicing"/>
    <isoform>
        <id>Q9NP66-1</id>
        <name>1</name>
        <sequence type="displayed"/>
    </isoform>
    <isoform>
        <id>Q9NP66-2</id>
        <name>2</name>
        <sequence type="described" ref="VSP_018621 VSP_018622"/>
    </isoform>
</comment>
<comment type="tissue specificity">
    <text evidence="6">Ubiquitous.</text>
</comment>
<feature type="chain" id="PRO_0000238649" description="High mobility group protein 20A">
    <location>
        <begin position="1"/>
        <end position="347"/>
    </location>
</feature>
<feature type="DNA-binding region" description="HMG box" evidence="4">
    <location>
        <begin position="103"/>
        <end position="171"/>
    </location>
</feature>
<feature type="region of interest" description="Disordered" evidence="5">
    <location>
        <begin position="1"/>
        <end position="113"/>
    </location>
</feature>
<feature type="region of interest" description="Disordered" evidence="5">
    <location>
        <begin position="179"/>
        <end position="211"/>
    </location>
</feature>
<feature type="coiled-coil region" evidence="3">
    <location>
        <begin position="229"/>
        <end position="273"/>
    </location>
</feature>
<feature type="compositionally biased region" description="Polar residues" evidence="5">
    <location>
        <begin position="1"/>
        <end position="10"/>
    </location>
</feature>
<feature type="compositionally biased region" description="Polar residues" evidence="5">
    <location>
        <begin position="40"/>
        <end position="49"/>
    </location>
</feature>
<feature type="compositionally biased region" description="Low complexity" evidence="5">
    <location>
        <begin position="55"/>
        <end position="66"/>
    </location>
</feature>
<feature type="compositionally biased region" description="Basic and acidic residues" evidence="5">
    <location>
        <begin position="72"/>
        <end position="82"/>
    </location>
</feature>
<feature type="compositionally biased region" description="Basic residues" evidence="5">
    <location>
        <begin position="83"/>
        <end position="96"/>
    </location>
</feature>
<feature type="compositionally biased region" description="Basic and acidic residues" evidence="5">
    <location>
        <begin position="182"/>
        <end position="211"/>
    </location>
</feature>
<feature type="modified residue" description="Phosphoserine" evidence="9 10 11 12 13 14">
    <location>
        <position position="105"/>
    </location>
</feature>
<feature type="splice variant" id="VSP_018621" description="In isoform 2." evidence="7">
    <original>QR</original>
    <variation>VS</variation>
    <location>
        <begin position="80"/>
        <end position="81"/>
    </location>
</feature>
<feature type="splice variant" id="VSP_018622" description="In isoform 2." evidence="7">
    <location>
        <begin position="82"/>
        <end position="347"/>
    </location>
</feature>
<feature type="sequence conflict" description="In Ref. 5; BAD96820." evidence="8" ref="5">
    <original>L</original>
    <variation>P</variation>
    <location>
        <position position="320"/>
    </location>
</feature>
<sequence>MENLMTSSTLPPLFADEDGSKESNDLATTGLNHPEVPYSSGATSSTNNPEFVEDLSQGQLLQSESSNAAEGNEQRHEDEQRSKRGGWSKGRKRKKPLRDSNAPKSPLTGYVRFMNERREQLRAKRPEVPFPEITRMLGNEWSKLPPEEKQRYLDEADRDKERYMKELEQYQKTEAYKVFSRKTQDRQKGKSHRQDAARQATHDHEKETEVKERSVFDIPIFTEEFLNHSKAREAELRQLRKSNMEFEERNAALQKHVESMRTAVEKLEVDVIQERSRNTVLQQHLETLRQVLTSSFASMPLPGSGETPTVDTIDSYMNRLHSIILANPQDNENFIATVREVVNRLDR</sequence>
<proteinExistence type="evidence at protein level"/>
<name>HM20A_HUMAN</name>
<gene>
    <name type="primary">HMG20A</name>
    <name type="synonym">HMGX1</name>
    <name type="synonym">HMGXB1</name>
</gene>
<dbReference type="EMBL" id="AF146222">
    <property type="protein sequence ID" value="AAF66706.1"/>
    <property type="molecule type" value="mRNA"/>
</dbReference>
<dbReference type="EMBL" id="AL355736">
    <property type="protein sequence ID" value="CAB90815.1"/>
    <property type="status" value="ALT_TERM"/>
    <property type="molecule type" value="mRNA"/>
</dbReference>
<dbReference type="EMBL" id="AL355737">
    <property type="protein sequence ID" value="CAB90816.1"/>
    <property type="molecule type" value="mRNA"/>
</dbReference>
<dbReference type="EMBL" id="AK001601">
    <property type="protein sequence ID" value="BAA91782.1"/>
    <property type="molecule type" value="mRNA"/>
</dbReference>
<dbReference type="EMBL" id="BT006716">
    <property type="protein sequence ID" value="AAP35362.1"/>
    <property type="molecule type" value="mRNA"/>
</dbReference>
<dbReference type="EMBL" id="AK223100">
    <property type="protein sequence ID" value="BAD96820.1"/>
    <property type="molecule type" value="mRNA"/>
</dbReference>
<dbReference type="EMBL" id="AC090984">
    <property type="status" value="NOT_ANNOTATED_CDS"/>
    <property type="molecule type" value="Genomic_DNA"/>
</dbReference>
<dbReference type="EMBL" id="CH471136">
    <property type="protein sequence ID" value="EAW99201.1"/>
    <property type="molecule type" value="Genomic_DNA"/>
</dbReference>
<dbReference type="EMBL" id="CH471136">
    <property type="protein sequence ID" value="EAW99202.1"/>
    <property type="molecule type" value="Genomic_DNA"/>
</dbReference>
<dbReference type="EMBL" id="CH471136">
    <property type="protein sequence ID" value="EAW99203.1"/>
    <property type="molecule type" value="Genomic_DNA"/>
</dbReference>
<dbReference type="EMBL" id="BC021959">
    <property type="protein sequence ID" value="AAH21959.1"/>
    <property type="molecule type" value="mRNA"/>
</dbReference>
<dbReference type="CCDS" id="CCDS10295.1">
    <molecule id="Q9NP66-1"/>
</dbReference>
<dbReference type="RefSeq" id="NP_001291433.1">
    <molecule id="Q9NP66-1"/>
    <property type="nucleotide sequence ID" value="NM_001304504.2"/>
</dbReference>
<dbReference type="RefSeq" id="NP_001291434.1">
    <property type="nucleotide sequence ID" value="NM_001304505.1"/>
</dbReference>
<dbReference type="RefSeq" id="NP_060670.1">
    <molecule id="Q9NP66-1"/>
    <property type="nucleotide sequence ID" value="NM_018200.4"/>
</dbReference>
<dbReference type="RefSeq" id="XP_011519460.1">
    <molecule id="Q9NP66-1"/>
    <property type="nucleotide sequence ID" value="XM_011521158.4"/>
</dbReference>
<dbReference type="RefSeq" id="XP_047288064.1">
    <molecule id="Q9NP66-1"/>
    <property type="nucleotide sequence ID" value="XM_047432108.1"/>
</dbReference>
<dbReference type="RefSeq" id="XP_047288065.1">
    <molecule id="Q9NP66-1"/>
    <property type="nucleotide sequence ID" value="XM_047432109.1"/>
</dbReference>
<dbReference type="RefSeq" id="XP_054233179.1">
    <molecule id="Q9NP66-1"/>
    <property type="nucleotide sequence ID" value="XM_054377204.1"/>
</dbReference>
<dbReference type="RefSeq" id="XP_054233180.1">
    <molecule id="Q9NP66-1"/>
    <property type="nucleotide sequence ID" value="XM_054377205.1"/>
</dbReference>
<dbReference type="RefSeq" id="XP_054233181.1">
    <molecule id="Q9NP66-1"/>
    <property type="nucleotide sequence ID" value="XM_054377206.1"/>
</dbReference>
<dbReference type="SMR" id="Q9NP66"/>
<dbReference type="BioGRID" id="115643">
    <property type="interactions" value="244"/>
</dbReference>
<dbReference type="CORUM" id="Q9NP66"/>
<dbReference type="FunCoup" id="Q9NP66">
    <property type="interactions" value="2839"/>
</dbReference>
<dbReference type="IntAct" id="Q9NP66">
    <property type="interactions" value="163"/>
</dbReference>
<dbReference type="MINT" id="Q9NP66"/>
<dbReference type="STRING" id="9606.ENSP00000371133"/>
<dbReference type="GlyGen" id="Q9NP66">
    <property type="glycosylation" value="1 site, 1 O-linked glycan (1 site)"/>
</dbReference>
<dbReference type="iPTMnet" id="Q9NP66"/>
<dbReference type="PhosphoSitePlus" id="Q9NP66"/>
<dbReference type="BioMuta" id="HMG20A"/>
<dbReference type="DMDM" id="74734297"/>
<dbReference type="jPOST" id="Q9NP66"/>
<dbReference type="MassIVE" id="Q9NP66"/>
<dbReference type="PaxDb" id="9606-ENSP00000371133"/>
<dbReference type="PeptideAtlas" id="Q9NP66"/>
<dbReference type="ProteomicsDB" id="81896">
    <molecule id="Q9NP66-1"/>
</dbReference>
<dbReference type="ProteomicsDB" id="81897">
    <molecule id="Q9NP66-2"/>
</dbReference>
<dbReference type="Pumba" id="Q9NP66"/>
<dbReference type="Antibodypedia" id="1449">
    <property type="antibodies" value="328 antibodies from 32 providers"/>
</dbReference>
<dbReference type="DNASU" id="10363"/>
<dbReference type="Ensembl" id="ENST00000336216.9">
    <molecule id="Q9NP66-1"/>
    <property type="protein sequence ID" value="ENSP00000336856.4"/>
    <property type="gene ID" value="ENSG00000140382.15"/>
</dbReference>
<dbReference type="Ensembl" id="ENST00000381714.7">
    <molecule id="Q9NP66-1"/>
    <property type="protein sequence ID" value="ENSP00000371133.3"/>
    <property type="gene ID" value="ENSG00000140382.15"/>
</dbReference>
<dbReference type="GeneID" id="10363"/>
<dbReference type="KEGG" id="hsa:10363"/>
<dbReference type="MANE-Select" id="ENST00000336216.9">
    <property type="protein sequence ID" value="ENSP00000336856.4"/>
    <property type="RefSeq nucleotide sequence ID" value="NM_001304504.2"/>
    <property type="RefSeq protein sequence ID" value="NP_001291433.1"/>
</dbReference>
<dbReference type="UCSC" id="uc002bcr.4">
    <molecule id="Q9NP66-1"/>
    <property type="organism name" value="human"/>
</dbReference>
<dbReference type="AGR" id="HGNC:5001"/>
<dbReference type="CTD" id="10363"/>
<dbReference type="DisGeNET" id="10363"/>
<dbReference type="GeneCards" id="HMG20A"/>
<dbReference type="HGNC" id="HGNC:5001">
    <property type="gene designation" value="HMG20A"/>
</dbReference>
<dbReference type="HPA" id="ENSG00000140382">
    <property type="expression patterns" value="Low tissue specificity"/>
</dbReference>
<dbReference type="MIM" id="605534">
    <property type="type" value="gene"/>
</dbReference>
<dbReference type="neXtProt" id="NX_Q9NP66"/>
<dbReference type="OpenTargets" id="ENSG00000140382"/>
<dbReference type="PharmGKB" id="PA29331"/>
<dbReference type="VEuPathDB" id="HostDB:ENSG00000140382"/>
<dbReference type="eggNOG" id="KOG0381">
    <property type="taxonomic scope" value="Eukaryota"/>
</dbReference>
<dbReference type="GeneTree" id="ENSGT00940000158464"/>
<dbReference type="HOGENOM" id="CLU_060006_0_0_1"/>
<dbReference type="InParanoid" id="Q9NP66"/>
<dbReference type="OMA" id="PRRGNWT"/>
<dbReference type="OrthoDB" id="3213154at2759"/>
<dbReference type="PAN-GO" id="Q9NP66">
    <property type="GO annotations" value="2 GO annotations based on evolutionary models"/>
</dbReference>
<dbReference type="PhylomeDB" id="Q9NP66"/>
<dbReference type="TreeFam" id="TF106440"/>
<dbReference type="PathwayCommons" id="Q9NP66"/>
<dbReference type="SignaLink" id="Q9NP66"/>
<dbReference type="BioGRID-ORCS" id="10363">
    <property type="hits" value="11 hits in 1186 CRISPR screens"/>
</dbReference>
<dbReference type="ChiTaRS" id="HMG20A">
    <property type="organism name" value="human"/>
</dbReference>
<dbReference type="GeneWiki" id="HMG20A"/>
<dbReference type="GenomeRNAi" id="10363"/>
<dbReference type="Pharos" id="Q9NP66">
    <property type="development level" value="Tbio"/>
</dbReference>
<dbReference type="PRO" id="PR:Q9NP66"/>
<dbReference type="Proteomes" id="UP000005640">
    <property type="component" value="Chromosome 15"/>
</dbReference>
<dbReference type="RNAct" id="Q9NP66">
    <property type="molecule type" value="protein"/>
</dbReference>
<dbReference type="Bgee" id="ENSG00000140382">
    <property type="expression patterns" value="Expressed in colonic epithelium and 204 other cell types or tissues"/>
</dbReference>
<dbReference type="ExpressionAtlas" id="Q9NP66">
    <property type="expression patterns" value="baseline and differential"/>
</dbReference>
<dbReference type="GO" id="GO:0005634">
    <property type="term" value="C:nucleus"/>
    <property type="evidence" value="ECO:0000318"/>
    <property type="project" value="GO_Central"/>
</dbReference>
<dbReference type="GO" id="GO:0003677">
    <property type="term" value="F:DNA binding"/>
    <property type="evidence" value="ECO:0007669"/>
    <property type="project" value="UniProtKB-KW"/>
</dbReference>
<dbReference type="GO" id="GO:0042802">
    <property type="term" value="F:identical protein binding"/>
    <property type="evidence" value="ECO:0000353"/>
    <property type="project" value="IntAct"/>
</dbReference>
<dbReference type="GO" id="GO:0006325">
    <property type="term" value="P:chromatin organization"/>
    <property type="evidence" value="ECO:0000303"/>
    <property type="project" value="UniProtKB"/>
</dbReference>
<dbReference type="GO" id="GO:0045665">
    <property type="term" value="P:negative regulation of neuron differentiation"/>
    <property type="evidence" value="ECO:0007669"/>
    <property type="project" value="Ensembl"/>
</dbReference>
<dbReference type="GO" id="GO:0033234">
    <property type="term" value="P:negative regulation of protein sumoylation"/>
    <property type="evidence" value="ECO:0007669"/>
    <property type="project" value="Ensembl"/>
</dbReference>
<dbReference type="GO" id="GO:0000122">
    <property type="term" value="P:negative regulation of transcription by RNA polymerase II"/>
    <property type="evidence" value="ECO:0007669"/>
    <property type="project" value="Ensembl"/>
</dbReference>
<dbReference type="GO" id="GO:0006355">
    <property type="term" value="P:regulation of DNA-templated transcription"/>
    <property type="evidence" value="ECO:0000303"/>
    <property type="project" value="UniProtKB"/>
</dbReference>
<dbReference type="GO" id="GO:0010468">
    <property type="term" value="P:regulation of gene expression"/>
    <property type="evidence" value="ECO:0000318"/>
    <property type="project" value="GO_Central"/>
</dbReference>
<dbReference type="CDD" id="cd22017">
    <property type="entry name" value="HMG-box_HMG20A"/>
    <property type="match status" value="1"/>
</dbReference>
<dbReference type="FunFam" id="1.10.30.10:FF:000031">
    <property type="entry name" value="High mobility group protein 20A"/>
    <property type="match status" value="1"/>
</dbReference>
<dbReference type="Gene3D" id="1.10.30.10">
    <property type="entry name" value="High mobility group box domain"/>
    <property type="match status" value="1"/>
</dbReference>
<dbReference type="InterPro" id="IPR051965">
    <property type="entry name" value="ChromReg_NeuronalGeneExpr"/>
</dbReference>
<dbReference type="InterPro" id="IPR009071">
    <property type="entry name" value="HMG_box_dom"/>
</dbReference>
<dbReference type="InterPro" id="IPR036910">
    <property type="entry name" value="HMG_box_dom_sf"/>
</dbReference>
<dbReference type="PANTHER" id="PTHR46040">
    <property type="entry name" value="HIGH MOBILITY GROUP PROTEIN 2"/>
    <property type="match status" value="1"/>
</dbReference>
<dbReference type="PANTHER" id="PTHR46040:SF1">
    <property type="entry name" value="HIGH MOBILITY GROUP PROTEIN 20A-RELATED"/>
    <property type="match status" value="1"/>
</dbReference>
<dbReference type="Pfam" id="PF00505">
    <property type="entry name" value="HMG_box"/>
    <property type="match status" value="1"/>
</dbReference>
<dbReference type="SMART" id="SM00398">
    <property type="entry name" value="HMG"/>
    <property type="match status" value="1"/>
</dbReference>
<dbReference type="SUPFAM" id="SSF47095">
    <property type="entry name" value="HMG-box"/>
    <property type="match status" value="1"/>
</dbReference>
<dbReference type="PROSITE" id="PS50118">
    <property type="entry name" value="HMG_BOX_2"/>
    <property type="match status" value="1"/>
</dbReference>
<evidence type="ECO:0000250" key="1"/>
<evidence type="ECO:0000250" key="2">
    <source>
        <dbReference type="UniProtKB" id="Q9DC33"/>
    </source>
</evidence>
<evidence type="ECO:0000255" key="3"/>
<evidence type="ECO:0000255" key="4">
    <source>
        <dbReference type="PROSITE-ProRule" id="PRU00267"/>
    </source>
</evidence>
<evidence type="ECO:0000256" key="5">
    <source>
        <dbReference type="SAM" id="MobiDB-lite"/>
    </source>
</evidence>
<evidence type="ECO:0000269" key="6">
    <source>
    </source>
</evidence>
<evidence type="ECO:0000303" key="7">
    <source ref="2"/>
</evidence>
<evidence type="ECO:0000305" key="8"/>
<evidence type="ECO:0007744" key="9">
    <source>
    </source>
</evidence>
<evidence type="ECO:0007744" key="10">
    <source>
    </source>
</evidence>
<evidence type="ECO:0007744" key="11">
    <source>
    </source>
</evidence>
<evidence type="ECO:0007744" key="12">
    <source>
    </source>
</evidence>
<evidence type="ECO:0007744" key="13">
    <source>
    </source>
</evidence>
<evidence type="ECO:0007744" key="14">
    <source>
    </source>
</evidence>
<accession>Q9NP66</accession>
<accession>A6NHY3</accession>
<accession>D3DW78</accession>
<accession>Q53G31</accession>
<accession>Q9NSF6</accession>
<reference key="1">
    <citation type="journal article" date="2000" name="Cytogenet. Cell Genet.">
        <title>HMG20A and HMG20B map to human chromosomes 15q24 and 19p13.3 and constitute a distinct class of HMG-box genes with ubiquitous expression.</title>
        <authorList>
            <person name="Sumoy L."/>
            <person name="Carim-Todd L."/>
            <person name="Escarceller M."/>
            <person name="Nadal M."/>
            <person name="Gratacos M."/>
            <person name="Pujana M.A."/>
            <person name="Estivill X."/>
            <person name="Peral B."/>
        </authorList>
    </citation>
    <scope>NUCLEOTIDE SEQUENCE [MRNA] (ISOFORM 1)</scope>
    <scope>TISSUE SPECIFICITY</scope>
</reference>
<reference key="2">
    <citation type="submission" date="2000-07" db="EMBL/GenBank/DDBJ databases">
        <authorList>
            <consortium name="The European IMAGE consortium"/>
        </authorList>
    </citation>
    <scope>NUCLEOTIDE SEQUENCE [LARGE SCALE MRNA] (ISOFORMS 1 AND 2)</scope>
</reference>
<reference key="3">
    <citation type="journal article" date="2004" name="Nat. Genet.">
        <title>Complete sequencing and characterization of 21,243 full-length human cDNAs.</title>
        <authorList>
            <person name="Ota T."/>
            <person name="Suzuki Y."/>
            <person name="Nishikawa T."/>
            <person name="Otsuki T."/>
            <person name="Sugiyama T."/>
            <person name="Irie R."/>
            <person name="Wakamatsu A."/>
            <person name="Hayashi K."/>
            <person name="Sato H."/>
            <person name="Nagai K."/>
            <person name="Kimura K."/>
            <person name="Makita H."/>
            <person name="Sekine M."/>
            <person name="Obayashi M."/>
            <person name="Nishi T."/>
            <person name="Shibahara T."/>
            <person name="Tanaka T."/>
            <person name="Ishii S."/>
            <person name="Yamamoto J."/>
            <person name="Saito K."/>
            <person name="Kawai Y."/>
            <person name="Isono Y."/>
            <person name="Nakamura Y."/>
            <person name="Nagahari K."/>
            <person name="Murakami K."/>
            <person name="Yasuda T."/>
            <person name="Iwayanagi T."/>
            <person name="Wagatsuma M."/>
            <person name="Shiratori A."/>
            <person name="Sudo H."/>
            <person name="Hosoiri T."/>
            <person name="Kaku Y."/>
            <person name="Kodaira H."/>
            <person name="Kondo H."/>
            <person name="Sugawara M."/>
            <person name="Takahashi M."/>
            <person name="Kanda K."/>
            <person name="Yokoi T."/>
            <person name="Furuya T."/>
            <person name="Kikkawa E."/>
            <person name="Omura Y."/>
            <person name="Abe K."/>
            <person name="Kamihara K."/>
            <person name="Katsuta N."/>
            <person name="Sato K."/>
            <person name="Tanikawa M."/>
            <person name="Yamazaki M."/>
            <person name="Ninomiya K."/>
            <person name="Ishibashi T."/>
            <person name="Yamashita H."/>
            <person name="Murakawa K."/>
            <person name="Fujimori K."/>
            <person name="Tanai H."/>
            <person name="Kimata M."/>
            <person name="Watanabe M."/>
            <person name="Hiraoka S."/>
            <person name="Chiba Y."/>
            <person name="Ishida S."/>
            <person name="Ono Y."/>
            <person name="Takiguchi S."/>
            <person name="Watanabe S."/>
            <person name="Yosida M."/>
            <person name="Hotuta T."/>
            <person name="Kusano J."/>
            <person name="Kanehori K."/>
            <person name="Takahashi-Fujii A."/>
            <person name="Hara H."/>
            <person name="Tanase T.-O."/>
            <person name="Nomura Y."/>
            <person name="Togiya S."/>
            <person name="Komai F."/>
            <person name="Hara R."/>
            <person name="Takeuchi K."/>
            <person name="Arita M."/>
            <person name="Imose N."/>
            <person name="Musashino K."/>
            <person name="Yuuki H."/>
            <person name="Oshima A."/>
            <person name="Sasaki N."/>
            <person name="Aotsuka S."/>
            <person name="Yoshikawa Y."/>
            <person name="Matsunawa H."/>
            <person name="Ichihara T."/>
            <person name="Shiohata N."/>
            <person name="Sano S."/>
            <person name="Moriya S."/>
            <person name="Momiyama H."/>
            <person name="Satoh N."/>
            <person name="Takami S."/>
            <person name="Terashima Y."/>
            <person name="Suzuki O."/>
            <person name="Nakagawa S."/>
            <person name="Senoh A."/>
            <person name="Mizoguchi H."/>
            <person name="Goto Y."/>
            <person name="Shimizu F."/>
            <person name="Wakebe H."/>
            <person name="Hishigaki H."/>
            <person name="Watanabe T."/>
            <person name="Sugiyama A."/>
            <person name="Takemoto M."/>
            <person name="Kawakami B."/>
            <person name="Yamazaki M."/>
            <person name="Watanabe K."/>
            <person name="Kumagai A."/>
            <person name="Itakura S."/>
            <person name="Fukuzumi Y."/>
            <person name="Fujimori Y."/>
            <person name="Komiyama M."/>
            <person name="Tashiro H."/>
            <person name="Tanigami A."/>
            <person name="Fujiwara T."/>
            <person name="Ono T."/>
            <person name="Yamada K."/>
            <person name="Fujii Y."/>
            <person name="Ozaki K."/>
            <person name="Hirao M."/>
            <person name="Ohmori Y."/>
            <person name="Kawabata A."/>
            <person name="Hikiji T."/>
            <person name="Kobatake N."/>
            <person name="Inagaki H."/>
            <person name="Ikema Y."/>
            <person name="Okamoto S."/>
            <person name="Okitani R."/>
            <person name="Kawakami T."/>
            <person name="Noguchi S."/>
            <person name="Itoh T."/>
            <person name="Shigeta K."/>
            <person name="Senba T."/>
            <person name="Matsumura K."/>
            <person name="Nakajima Y."/>
            <person name="Mizuno T."/>
            <person name="Morinaga M."/>
            <person name="Sasaki M."/>
            <person name="Togashi T."/>
            <person name="Oyama M."/>
            <person name="Hata H."/>
            <person name="Watanabe M."/>
            <person name="Komatsu T."/>
            <person name="Mizushima-Sugano J."/>
            <person name="Satoh T."/>
            <person name="Shirai Y."/>
            <person name="Takahashi Y."/>
            <person name="Nakagawa K."/>
            <person name="Okumura K."/>
            <person name="Nagase T."/>
            <person name="Nomura N."/>
            <person name="Kikuchi H."/>
            <person name="Masuho Y."/>
            <person name="Yamashita R."/>
            <person name="Nakai K."/>
            <person name="Yada T."/>
            <person name="Nakamura Y."/>
            <person name="Ohara O."/>
            <person name="Isogai T."/>
            <person name="Sugano S."/>
        </authorList>
    </citation>
    <scope>NUCLEOTIDE SEQUENCE [LARGE SCALE MRNA] (ISOFORM 1)</scope>
</reference>
<reference key="4">
    <citation type="submission" date="2003-05" db="EMBL/GenBank/DDBJ databases">
        <title>Cloning of human full-length CDSs in BD Creator(TM) system donor vector.</title>
        <authorList>
            <person name="Kalnine N."/>
            <person name="Chen X."/>
            <person name="Rolfs A."/>
            <person name="Halleck A."/>
            <person name="Hines L."/>
            <person name="Eisenstein S."/>
            <person name="Koundinya M."/>
            <person name="Raphael J."/>
            <person name="Moreira D."/>
            <person name="Kelley T."/>
            <person name="LaBaer J."/>
            <person name="Lin Y."/>
            <person name="Phelan M."/>
            <person name="Farmer A."/>
        </authorList>
    </citation>
    <scope>NUCLEOTIDE SEQUENCE [LARGE SCALE MRNA] (ISOFORM 1)</scope>
</reference>
<reference key="5">
    <citation type="submission" date="2005-04" db="EMBL/GenBank/DDBJ databases">
        <authorList>
            <person name="Suzuki Y."/>
            <person name="Sugano S."/>
            <person name="Totoki Y."/>
            <person name="Toyoda A."/>
            <person name="Takeda T."/>
            <person name="Sakaki Y."/>
            <person name="Tanaka A."/>
            <person name="Yokoyama S."/>
        </authorList>
    </citation>
    <scope>NUCLEOTIDE SEQUENCE [LARGE SCALE MRNA] (ISOFORM 1)</scope>
</reference>
<reference key="6">
    <citation type="journal article" date="2006" name="Nature">
        <title>Analysis of the DNA sequence and duplication history of human chromosome 15.</title>
        <authorList>
            <person name="Zody M.C."/>
            <person name="Garber M."/>
            <person name="Sharpe T."/>
            <person name="Young S.K."/>
            <person name="Rowen L."/>
            <person name="O'Neill K."/>
            <person name="Whittaker C.A."/>
            <person name="Kamal M."/>
            <person name="Chang J.L."/>
            <person name="Cuomo C.A."/>
            <person name="Dewar K."/>
            <person name="FitzGerald M.G."/>
            <person name="Kodira C.D."/>
            <person name="Madan A."/>
            <person name="Qin S."/>
            <person name="Yang X."/>
            <person name="Abbasi N."/>
            <person name="Abouelleil A."/>
            <person name="Arachchi H.M."/>
            <person name="Baradarani L."/>
            <person name="Birditt B."/>
            <person name="Bloom S."/>
            <person name="Bloom T."/>
            <person name="Borowsky M.L."/>
            <person name="Burke J."/>
            <person name="Butler J."/>
            <person name="Cook A."/>
            <person name="DeArellano K."/>
            <person name="DeCaprio D."/>
            <person name="Dorris L. III"/>
            <person name="Dors M."/>
            <person name="Eichler E.E."/>
            <person name="Engels R."/>
            <person name="Fahey J."/>
            <person name="Fleetwood P."/>
            <person name="Friedman C."/>
            <person name="Gearin G."/>
            <person name="Hall J.L."/>
            <person name="Hensley G."/>
            <person name="Johnson E."/>
            <person name="Jones C."/>
            <person name="Kamat A."/>
            <person name="Kaur A."/>
            <person name="Locke D.P."/>
            <person name="Madan A."/>
            <person name="Munson G."/>
            <person name="Jaffe D.B."/>
            <person name="Lui A."/>
            <person name="Macdonald P."/>
            <person name="Mauceli E."/>
            <person name="Naylor J.W."/>
            <person name="Nesbitt R."/>
            <person name="Nicol R."/>
            <person name="O'Leary S.B."/>
            <person name="Ratcliffe A."/>
            <person name="Rounsley S."/>
            <person name="She X."/>
            <person name="Sneddon K.M.B."/>
            <person name="Stewart S."/>
            <person name="Sougnez C."/>
            <person name="Stone S.M."/>
            <person name="Topham K."/>
            <person name="Vincent D."/>
            <person name="Wang S."/>
            <person name="Zimmer A.R."/>
            <person name="Birren B.W."/>
            <person name="Hood L."/>
            <person name="Lander E.S."/>
            <person name="Nusbaum C."/>
        </authorList>
    </citation>
    <scope>NUCLEOTIDE SEQUENCE [LARGE SCALE GENOMIC DNA]</scope>
</reference>
<reference key="7">
    <citation type="submission" date="2005-09" db="EMBL/GenBank/DDBJ databases">
        <authorList>
            <person name="Mural R.J."/>
            <person name="Istrail S."/>
            <person name="Sutton G.G."/>
            <person name="Florea L."/>
            <person name="Halpern A.L."/>
            <person name="Mobarry C.M."/>
            <person name="Lippert R."/>
            <person name="Walenz B."/>
            <person name="Shatkay H."/>
            <person name="Dew I."/>
            <person name="Miller J.R."/>
            <person name="Flanigan M.J."/>
            <person name="Edwards N.J."/>
            <person name="Bolanos R."/>
            <person name="Fasulo D."/>
            <person name="Halldorsson B.V."/>
            <person name="Hannenhalli S."/>
            <person name="Turner R."/>
            <person name="Yooseph S."/>
            <person name="Lu F."/>
            <person name="Nusskern D.R."/>
            <person name="Shue B.C."/>
            <person name="Zheng X.H."/>
            <person name="Zhong F."/>
            <person name="Delcher A.L."/>
            <person name="Huson D.H."/>
            <person name="Kravitz S.A."/>
            <person name="Mouchard L."/>
            <person name="Reinert K."/>
            <person name="Remington K.A."/>
            <person name="Clark A.G."/>
            <person name="Waterman M.S."/>
            <person name="Eichler E.E."/>
            <person name="Adams M.D."/>
            <person name="Hunkapiller M.W."/>
            <person name="Myers E.W."/>
            <person name="Venter J.C."/>
        </authorList>
    </citation>
    <scope>NUCLEOTIDE SEQUENCE [LARGE SCALE GENOMIC DNA]</scope>
</reference>
<reference key="8">
    <citation type="journal article" date="2004" name="Genome Res.">
        <title>The status, quality, and expansion of the NIH full-length cDNA project: the Mammalian Gene Collection (MGC).</title>
        <authorList>
            <consortium name="The MGC Project Team"/>
        </authorList>
    </citation>
    <scope>NUCLEOTIDE SEQUENCE [LARGE SCALE MRNA] (ISOFORM 1)</scope>
    <source>
        <tissue>Uterus</tissue>
    </source>
</reference>
<reference key="9">
    <citation type="journal article" date="2008" name="Proc. Natl. Acad. Sci. U.S.A.">
        <title>A quantitative atlas of mitotic phosphorylation.</title>
        <authorList>
            <person name="Dephoure N."/>
            <person name="Zhou C."/>
            <person name="Villen J."/>
            <person name="Beausoleil S.A."/>
            <person name="Bakalarski C.E."/>
            <person name="Elledge S.J."/>
            <person name="Gygi S.P."/>
        </authorList>
    </citation>
    <scope>PHOSPHORYLATION [LARGE SCALE ANALYSIS] AT SER-105</scope>
    <scope>IDENTIFICATION BY MASS SPECTROMETRY [LARGE SCALE ANALYSIS]</scope>
    <source>
        <tissue>Cervix carcinoma</tissue>
    </source>
</reference>
<reference key="10">
    <citation type="journal article" date="2009" name="Sci. Signal.">
        <title>Quantitative phosphoproteomic analysis of T cell receptor signaling reveals system-wide modulation of protein-protein interactions.</title>
        <authorList>
            <person name="Mayya V."/>
            <person name="Lundgren D.H."/>
            <person name="Hwang S.-I."/>
            <person name="Rezaul K."/>
            <person name="Wu L."/>
            <person name="Eng J.K."/>
            <person name="Rodionov V."/>
            <person name="Han D.K."/>
        </authorList>
    </citation>
    <scope>PHOSPHORYLATION [LARGE SCALE ANALYSIS] AT SER-105</scope>
    <scope>IDENTIFICATION BY MASS SPECTROMETRY [LARGE SCALE ANALYSIS]</scope>
    <source>
        <tissue>Leukemic T-cell</tissue>
    </source>
</reference>
<reference key="11">
    <citation type="journal article" date="2010" name="Sci. Signal.">
        <title>Quantitative phosphoproteomics reveals widespread full phosphorylation site occupancy during mitosis.</title>
        <authorList>
            <person name="Olsen J.V."/>
            <person name="Vermeulen M."/>
            <person name="Santamaria A."/>
            <person name="Kumar C."/>
            <person name="Miller M.L."/>
            <person name="Jensen L.J."/>
            <person name="Gnad F."/>
            <person name="Cox J."/>
            <person name="Jensen T.S."/>
            <person name="Nigg E.A."/>
            <person name="Brunak S."/>
            <person name="Mann M."/>
        </authorList>
    </citation>
    <scope>PHOSPHORYLATION [LARGE SCALE ANALYSIS] AT SER-105</scope>
    <scope>IDENTIFICATION BY MASS SPECTROMETRY [LARGE SCALE ANALYSIS]</scope>
    <source>
        <tissue>Cervix carcinoma</tissue>
    </source>
</reference>
<reference key="12">
    <citation type="journal article" date="2011" name="BMC Syst. Biol.">
        <title>Initial characterization of the human central proteome.</title>
        <authorList>
            <person name="Burkard T.R."/>
            <person name="Planyavsky M."/>
            <person name="Kaupe I."/>
            <person name="Breitwieser F.P."/>
            <person name="Buerckstuemmer T."/>
            <person name="Bennett K.L."/>
            <person name="Superti-Furga G."/>
            <person name="Colinge J."/>
        </authorList>
    </citation>
    <scope>IDENTIFICATION BY MASS SPECTROMETRY [LARGE SCALE ANALYSIS]</scope>
</reference>
<reference key="13">
    <citation type="journal article" date="2011" name="Sci. Signal.">
        <title>System-wide temporal characterization of the proteome and phosphoproteome of human embryonic stem cell differentiation.</title>
        <authorList>
            <person name="Rigbolt K.T."/>
            <person name="Prokhorova T.A."/>
            <person name="Akimov V."/>
            <person name="Henningsen J."/>
            <person name="Johansen P.T."/>
            <person name="Kratchmarova I."/>
            <person name="Kassem M."/>
            <person name="Mann M."/>
            <person name="Olsen J.V."/>
            <person name="Blagoev B."/>
        </authorList>
    </citation>
    <scope>PHOSPHORYLATION [LARGE SCALE ANALYSIS] AT SER-105</scope>
    <scope>IDENTIFICATION BY MASS SPECTROMETRY [LARGE SCALE ANALYSIS]</scope>
</reference>
<reference key="14">
    <citation type="journal article" date="2013" name="J. Proteome Res.">
        <title>Toward a comprehensive characterization of a human cancer cell phosphoproteome.</title>
        <authorList>
            <person name="Zhou H."/>
            <person name="Di Palma S."/>
            <person name="Preisinger C."/>
            <person name="Peng M."/>
            <person name="Polat A.N."/>
            <person name="Heck A.J."/>
            <person name="Mohammed S."/>
        </authorList>
    </citation>
    <scope>PHOSPHORYLATION [LARGE SCALE ANALYSIS] AT SER-105</scope>
    <scope>IDENTIFICATION BY MASS SPECTROMETRY [LARGE SCALE ANALYSIS]</scope>
    <source>
        <tissue>Cervix carcinoma</tissue>
        <tissue>Erythroleukemia</tissue>
    </source>
</reference>
<reference key="15">
    <citation type="journal article" date="2014" name="J. Proteomics">
        <title>An enzyme assisted RP-RPLC approach for in-depth analysis of human liver phosphoproteome.</title>
        <authorList>
            <person name="Bian Y."/>
            <person name="Song C."/>
            <person name="Cheng K."/>
            <person name="Dong M."/>
            <person name="Wang F."/>
            <person name="Huang J."/>
            <person name="Sun D."/>
            <person name="Wang L."/>
            <person name="Ye M."/>
            <person name="Zou H."/>
        </authorList>
    </citation>
    <scope>PHOSPHORYLATION [LARGE SCALE ANALYSIS] AT SER-105</scope>
    <scope>IDENTIFICATION BY MASS SPECTROMETRY [LARGE SCALE ANALYSIS]</scope>
    <source>
        <tissue>Liver</tissue>
    </source>
</reference>
<keyword id="KW-0025">Alternative splicing</keyword>
<keyword id="KW-0156">Chromatin regulator</keyword>
<keyword id="KW-0175">Coiled coil</keyword>
<keyword id="KW-0238">DNA-binding</keyword>
<keyword id="KW-0539">Nucleus</keyword>
<keyword id="KW-0597">Phosphoprotein</keyword>
<keyword id="KW-1267">Proteomics identification</keyword>
<keyword id="KW-1185">Reference proteome</keyword>
<keyword id="KW-0804">Transcription</keyword>
<keyword id="KW-0805">Transcription regulation</keyword>
<organism>
    <name type="scientific">Homo sapiens</name>
    <name type="common">Human</name>
    <dbReference type="NCBI Taxonomy" id="9606"/>
    <lineage>
        <taxon>Eukaryota</taxon>
        <taxon>Metazoa</taxon>
        <taxon>Chordata</taxon>
        <taxon>Craniata</taxon>
        <taxon>Vertebrata</taxon>
        <taxon>Euteleostomi</taxon>
        <taxon>Mammalia</taxon>
        <taxon>Eutheria</taxon>
        <taxon>Euarchontoglires</taxon>
        <taxon>Primates</taxon>
        <taxon>Haplorrhini</taxon>
        <taxon>Catarrhini</taxon>
        <taxon>Hominidae</taxon>
        <taxon>Homo</taxon>
    </lineage>
</organism>